<keyword id="KW-0067">ATP-binding</keyword>
<keyword id="KW-1003">Cell membrane</keyword>
<keyword id="KW-0406">Ion transport</keyword>
<keyword id="KW-0472">Membrane</keyword>
<keyword id="KW-0547">Nucleotide-binding</keyword>
<keyword id="KW-0630">Potassium</keyword>
<keyword id="KW-0633">Potassium transport</keyword>
<keyword id="KW-0812">Transmembrane</keyword>
<keyword id="KW-1133">Transmembrane helix</keyword>
<keyword id="KW-0813">Transport</keyword>
<proteinExistence type="inferred from homology"/>
<dbReference type="EMBL" id="CP000875">
    <property type="protein sequence ID" value="ABX04918.1"/>
    <property type="molecule type" value="Genomic_DNA"/>
</dbReference>
<dbReference type="SMR" id="A9AXV2"/>
<dbReference type="STRING" id="316274.Haur_2278"/>
<dbReference type="KEGG" id="hau:Haur_2278"/>
<dbReference type="eggNOG" id="COG2156">
    <property type="taxonomic scope" value="Bacteria"/>
</dbReference>
<dbReference type="HOGENOM" id="CLU_077094_2_0_0"/>
<dbReference type="InParanoid" id="A9AXV2"/>
<dbReference type="Proteomes" id="UP000000787">
    <property type="component" value="Chromosome"/>
</dbReference>
<dbReference type="GO" id="GO:0005886">
    <property type="term" value="C:plasma membrane"/>
    <property type="evidence" value="ECO:0007669"/>
    <property type="project" value="UniProtKB-SubCell"/>
</dbReference>
<dbReference type="GO" id="GO:0005524">
    <property type="term" value="F:ATP binding"/>
    <property type="evidence" value="ECO:0007669"/>
    <property type="project" value="UniProtKB-UniRule"/>
</dbReference>
<dbReference type="GO" id="GO:0008556">
    <property type="term" value="F:P-type potassium transmembrane transporter activity"/>
    <property type="evidence" value="ECO:0007669"/>
    <property type="project" value="InterPro"/>
</dbReference>
<dbReference type="HAMAP" id="MF_00276">
    <property type="entry name" value="KdpC"/>
    <property type="match status" value="1"/>
</dbReference>
<dbReference type="InterPro" id="IPR003820">
    <property type="entry name" value="KdpC"/>
</dbReference>
<dbReference type="NCBIfam" id="TIGR00681">
    <property type="entry name" value="kdpC"/>
    <property type="match status" value="1"/>
</dbReference>
<dbReference type="NCBIfam" id="NF001454">
    <property type="entry name" value="PRK00315.1"/>
    <property type="match status" value="1"/>
</dbReference>
<dbReference type="PANTHER" id="PTHR30042">
    <property type="entry name" value="POTASSIUM-TRANSPORTING ATPASE C CHAIN"/>
    <property type="match status" value="1"/>
</dbReference>
<dbReference type="PANTHER" id="PTHR30042:SF2">
    <property type="entry name" value="POTASSIUM-TRANSPORTING ATPASE KDPC SUBUNIT"/>
    <property type="match status" value="1"/>
</dbReference>
<dbReference type="Pfam" id="PF02669">
    <property type="entry name" value="KdpC"/>
    <property type="match status" value="1"/>
</dbReference>
<dbReference type="PIRSF" id="PIRSF001296">
    <property type="entry name" value="K_ATPase_KdpC"/>
    <property type="match status" value="1"/>
</dbReference>
<sequence>MRTFFRPALAAIIIFSVLTGVIYPALVTVIAQVTFPGQANGSLIEQAGQQRGSSLIGQQFDQPEYFWGRLSATGPVPYNAAASSGSNYGPLNPALAEAVQARIDALKAADPSNQLPIPVDLVTASASGLDPEISPAAANYQVQRVAAARGLAVEQVQQLVEQHTSQRTLGVLGEPRVNVLQLNIALDQIKSLD</sequence>
<evidence type="ECO:0000255" key="1">
    <source>
        <dbReference type="HAMAP-Rule" id="MF_00276"/>
    </source>
</evidence>
<accession>A9AXV2</accession>
<comment type="function">
    <text evidence="1">Part of the high-affinity ATP-driven potassium transport (or Kdp) system, which catalyzes the hydrolysis of ATP coupled with the electrogenic transport of potassium into the cytoplasm. This subunit acts as a catalytic chaperone that increases the ATP-binding affinity of the ATP-hydrolyzing subunit KdpB by the formation of a transient KdpB/KdpC/ATP ternary complex.</text>
</comment>
<comment type="subunit">
    <text evidence="1">The system is composed of three essential subunits: KdpA, KdpB and KdpC.</text>
</comment>
<comment type="subcellular location">
    <subcellularLocation>
        <location evidence="1">Cell membrane</location>
        <topology evidence="1">Single-pass membrane protein</topology>
    </subcellularLocation>
</comment>
<comment type="similarity">
    <text evidence="1">Belongs to the KdpC family.</text>
</comment>
<organism>
    <name type="scientific">Herpetosiphon aurantiacus (strain ATCC 23779 / DSM 785 / 114-95)</name>
    <dbReference type="NCBI Taxonomy" id="316274"/>
    <lineage>
        <taxon>Bacteria</taxon>
        <taxon>Bacillati</taxon>
        <taxon>Chloroflexota</taxon>
        <taxon>Chloroflexia</taxon>
        <taxon>Herpetosiphonales</taxon>
        <taxon>Herpetosiphonaceae</taxon>
        <taxon>Herpetosiphon</taxon>
    </lineage>
</organism>
<name>KDPC_HERA2</name>
<gene>
    <name evidence="1" type="primary">kdpC</name>
    <name type="ordered locus">Haur_2278</name>
</gene>
<feature type="chain" id="PRO_1000114727" description="Potassium-transporting ATPase KdpC subunit">
    <location>
        <begin position="1"/>
        <end position="193"/>
    </location>
</feature>
<feature type="transmembrane region" description="Helical" evidence="1">
    <location>
        <begin position="10"/>
        <end position="30"/>
    </location>
</feature>
<reference key="1">
    <citation type="journal article" date="2011" name="Stand. Genomic Sci.">
        <title>Complete genome sequence of the filamentous gliding predatory bacterium Herpetosiphon aurantiacus type strain (114-95(T)).</title>
        <authorList>
            <person name="Kiss H."/>
            <person name="Nett M."/>
            <person name="Domin N."/>
            <person name="Martin K."/>
            <person name="Maresca J.A."/>
            <person name="Copeland A."/>
            <person name="Lapidus A."/>
            <person name="Lucas S."/>
            <person name="Berry K.W."/>
            <person name="Glavina Del Rio T."/>
            <person name="Dalin E."/>
            <person name="Tice H."/>
            <person name="Pitluck S."/>
            <person name="Richardson P."/>
            <person name="Bruce D."/>
            <person name="Goodwin L."/>
            <person name="Han C."/>
            <person name="Detter J.C."/>
            <person name="Schmutz J."/>
            <person name="Brettin T."/>
            <person name="Land M."/>
            <person name="Hauser L."/>
            <person name="Kyrpides N.C."/>
            <person name="Ivanova N."/>
            <person name="Goeker M."/>
            <person name="Woyke T."/>
            <person name="Klenk H.P."/>
            <person name="Bryant D.A."/>
        </authorList>
    </citation>
    <scope>NUCLEOTIDE SEQUENCE [LARGE SCALE GENOMIC DNA]</scope>
    <source>
        <strain>ATCC 23779 / DSM 785 / 114-95</strain>
    </source>
</reference>
<protein>
    <recommendedName>
        <fullName evidence="1">Potassium-transporting ATPase KdpC subunit</fullName>
    </recommendedName>
    <alternativeName>
        <fullName evidence="1">ATP phosphohydrolase [potassium-transporting] C chain</fullName>
    </alternativeName>
    <alternativeName>
        <fullName evidence="1">Potassium-binding and translocating subunit C</fullName>
    </alternativeName>
    <alternativeName>
        <fullName evidence="1">Potassium-translocating ATPase C chain</fullName>
    </alternativeName>
</protein>